<gene>
    <name type="primary">lpl1</name>
    <name type="ordered locus">SA0396</name>
</gene>
<organism>
    <name type="scientific">Staphylococcus aureus (strain N315)</name>
    <dbReference type="NCBI Taxonomy" id="158879"/>
    <lineage>
        <taxon>Bacteria</taxon>
        <taxon>Bacillati</taxon>
        <taxon>Bacillota</taxon>
        <taxon>Bacilli</taxon>
        <taxon>Bacillales</taxon>
        <taxon>Staphylococcaceae</taxon>
        <taxon>Staphylococcus</taxon>
    </lineage>
</organism>
<dbReference type="EMBL" id="BA000018">
    <property type="protein sequence ID" value="BAB41625.1"/>
    <property type="status" value="ALT_INIT"/>
    <property type="molecule type" value="Genomic_DNA"/>
</dbReference>
<dbReference type="PIR" id="F89808">
    <property type="entry name" value="F89808"/>
</dbReference>
<dbReference type="RefSeq" id="WP_001802013.1">
    <property type="nucleotide sequence ID" value="NC_002745.2"/>
</dbReference>
<dbReference type="SMR" id="Q7A7G6"/>
<dbReference type="EnsemblBacteria" id="BAB41625">
    <property type="protein sequence ID" value="BAB41625"/>
    <property type="gene ID" value="BAB41625"/>
</dbReference>
<dbReference type="KEGG" id="sau:SA0396"/>
<dbReference type="HOGENOM" id="CLU_071589_0_1_9"/>
<dbReference type="GO" id="GO:0005886">
    <property type="term" value="C:plasma membrane"/>
    <property type="evidence" value="ECO:0007669"/>
    <property type="project" value="UniProtKB-SubCell"/>
</dbReference>
<dbReference type="Gene3D" id="2.50.20.40">
    <property type="match status" value="1"/>
</dbReference>
<dbReference type="InterPro" id="IPR007595">
    <property type="entry name" value="Csa"/>
</dbReference>
<dbReference type="InterPro" id="IPR038641">
    <property type="entry name" value="Csa_sf"/>
</dbReference>
<dbReference type="NCBIfam" id="TIGR01742">
    <property type="entry name" value="SA_tandem_lipo"/>
    <property type="match status" value="1"/>
</dbReference>
<dbReference type="Pfam" id="PF04507">
    <property type="entry name" value="DUF576"/>
    <property type="match status" value="1"/>
</dbReference>
<dbReference type="PROSITE" id="PS51257">
    <property type="entry name" value="PROKAR_LIPOPROTEIN"/>
    <property type="match status" value="1"/>
</dbReference>
<comment type="subcellular location">
    <subcellularLocation>
        <location evidence="1">Cell membrane</location>
        <topology evidence="1">Lipid-anchor</topology>
    </subcellularLocation>
</comment>
<comment type="similarity">
    <text evidence="2">Belongs to the staphylococcal tandem lipoprotein family.</text>
</comment>
<comment type="sequence caution" evidence="2">
    <conflict type="erroneous initiation">
        <sequence resource="EMBL-CDS" id="BAB41625"/>
    </conflict>
</comment>
<reference key="1">
    <citation type="journal article" date="2001" name="Lancet">
        <title>Whole genome sequencing of meticillin-resistant Staphylococcus aureus.</title>
        <authorList>
            <person name="Kuroda M."/>
            <person name="Ohta T."/>
            <person name="Uchiyama I."/>
            <person name="Baba T."/>
            <person name="Yuzawa H."/>
            <person name="Kobayashi I."/>
            <person name="Cui L."/>
            <person name="Oguchi A."/>
            <person name="Aoki K."/>
            <person name="Nagai Y."/>
            <person name="Lian J.-Q."/>
            <person name="Ito T."/>
            <person name="Kanamori M."/>
            <person name="Matsumaru H."/>
            <person name="Maruyama A."/>
            <person name="Murakami H."/>
            <person name="Hosoyama A."/>
            <person name="Mizutani-Ui Y."/>
            <person name="Takahashi N.K."/>
            <person name="Sawano T."/>
            <person name="Inoue R."/>
            <person name="Kaito C."/>
            <person name="Sekimizu K."/>
            <person name="Hirakawa H."/>
            <person name="Kuhara S."/>
            <person name="Goto S."/>
            <person name="Yabuzaki J."/>
            <person name="Kanehisa M."/>
            <person name="Yamashita A."/>
            <person name="Oshima K."/>
            <person name="Furuya K."/>
            <person name="Yoshino C."/>
            <person name="Shiba T."/>
            <person name="Hattori M."/>
            <person name="Ogasawara N."/>
            <person name="Hayashi H."/>
            <person name="Hiramatsu K."/>
        </authorList>
    </citation>
    <scope>NUCLEOTIDE SEQUENCE [LARGE SCALE GENOMIC DNA]</scope>
    <source>
        <strain>N315</strain>
    </source>
</reference>
<feature type="signal peptide" evidence="1">
    <location>
        <begin position="1"/>
        <end position="22"/>
    </location>
</feature>
<feature type="chain" id="PRO_0000282142" description="Uncharacterized lipoprotein SA0396">
    <location>
        <begin position="23"/>
        <end position="257"/>
    </location>
</feature>
<feature type="lipid moiety-binding region" description="N-palmitoyl cysteine" evidence="1">
    <location>
        <position position="23"/>
    </location>
</feature>
<feature type="lipid moiety-binding region" description="S-diacylglycerol cysteine" evidence="1">
    <location>
        <position position="23"/>
    </location>
</feature>
<keyword id="KW-1003">Cell membrane</keyword>
<keyword id="KW-0449">Lipoprotein</keyword>
<keyword id="KW-0472">Membrane</keyword>
<keyword id="KW-0564">Palmitate</keyword>
<keyword id="KW-0732">Signal</keyword>
<accession>Q7A7G6</accession>
<evidence type="ECO:0000255" key="1">
    <source>
        <dbReference type="PROSITE-ProRule" id="PRU00303"/>
    </source>
</evidence>
<evidence type="ECO:0000305" key="2"/>
<proteinExistence type="inferred from homology"/>
<protein>
    <recommendedName>
        <fullName>Uncharacterized lipoprotein SA0396</fullName>
    </recommendedName>
</protein>
<name>Y396_STAAN</name>
<sequence>MRYLKRLSWYISILILIVVIAGCGKGNETKEGSKEEQIKKSFAKTLDMYPIKNLEDLYDKEGYRDSEFKKSDKGTWTIYTDFAKSNKPGELDDEGMVLNLDRNTRTAKGHYFVTTFYRNGKLPDEKNYKIEMKNNKIILLDEVKDDKLKQKIENFKFFGQYANLKELRKYNNGDVSINENVPSYDVEYKMSNKDEIVKELRSRYNISTEKSPILKMHIDGDLKGSSVGYRKLEIDFSKRENSKLSVIEFLSYKPAKK</sequence>